<gene>
    <name evidence="1" type="primary">purM</name>
    <name type="ordered locus">MmarC5_0337</name>
</gene>
<proteinExistence type="inferred from homology"/>
<dbReference type="EC" id="6.3.3.1" evidence="1"/>
<dbReference type="EMBL" id="CP000609">
    <property type="protein sequence ID" value="ABO34653.1"/>
    <property type="molecule type" value="Genomic_DNA"/>
</dbReference>
<dbReference type="RefSeq" id="WP_011868108.1">
    <property type="nucleotide sequence ID" value="NC_009135.1"/>
</dbReference>
<dbReference type="SMR" id="A4FWS4"/>
<dbReference type="STRING" id="402880.MmarC5_0337"/>
<dbReference type="GeneID" id="4928957"/>
<dbReference type="KEGG" id="mmq:MmarC5_0337"/>
<dbReference type="eggNOG" id="arCOG00639">
    <property type="taxonomic scope" value="Archaea"/>
</dbReference>
<dbReference type="HOGENOM" id="CLU_047116_0_0_2"/>
<dbReference type="OrthoDB" id="6605at2157"/>
<dbReference type="UniPathway" id="UPA00074">
    <property type="reaction ID" value="UER00129"/>
</dbReference>
<dbReference type="Proteomes" id="UP000000253">
    <property type="component" value="Chromosome"/>
</dbReference>
<dbReference type="GO" id="GO:0005829">
    <property type="term" value="C:cytosol"/>
    <property type="evidence" value="ECO:0007669"/>
    <property type="project" value="TreeGrafter"/>
</dbReference>
<dbReference type="GO" id="GO:0005524">
    <property type="term" value="F:ATP binding"/>
    <property type="evidence" value="ECO:0007669"/>
    <property type="project" value="UniProtKB-KW"/>
</dbReference>
<dbReference type="GO" id="GO:0004637">
    <property type="term" value="F:phosphoribosylamine-glycine ligase activity"/>
    <property type="evidence" value="ECO:0007669"/>
    <property type="project" value="TreeGrafter"/>
</dbReference>
<dbReference type="GO" id="GO:0004641">
    <property type="term" value="F:phosphoribosylformylglycinamidine cyclo-ligase activity"/>
    <property type="evidence" value="ECO:0007669"/>
    <property type="project" value="UniProtKB-UniRule"/>
</dbReference>
<dbReference type="GO" id="GO:0006189">
    <property type="term" value="P:'de novo' IMP biosynthetic process"/>
    <property type="evidence" value="ECO:0007669"/>
    <property type="project" value="UniProtKB-UniRule"/>
</dbReference>
<dbReference type="GO" id="GO:0046084">
    <property type="term" value="P:adenine biosynthetic process"/>
    <property type="evidence" value="ECO:0007669"/>
    <property type="project" value="TreeGrafter"/>
</dbReference>
<dbReference type="CDD" id="cd02196">
    <property type="entry name" value="PurM"/>
    <property type="match status" value="1"/>
</dbReference>
<dbReference type="FunFam" id="3.30.1330.10:FF:000020">
    <property type="entry name" value="Phosphoribosylformylglycinamidine cyclo-ligase"/>
    <property type="match status" value="1"/>
</dbReference>
<dbReference type="FunFam" id="3.90.650.10:FF:000011">
    <property type="entry name" value="Phosphoribosylformylglycinamidine cyclo-ligase"/>
    <property type="match status" value="1"/>
</dbReference>
<dbReference type="Gene3D" id="3.90.650.10">
    <property type="entry name" value="PurM-like C-terminal domain"/>
    <property type="match status" value="1"/>
</dbReference>
<dbReference type="Gene3D" id="3.30.1330.10">
    <property type="entry name" value="PurM-like, N-terminal domain"/>
    <property type="match status" value="1"/>
</dbReference>
<dbReference type="HAMAP" id="MF_00741">
    <property type="entry name" value="AIRS"/>
    <property type="match status" value="1"/>
</dbReference>
<dbReference type="InterPro" id="IPR010918">
    <property type="entry name" value="PurM-like_C_dom"/>
</dbReference>
<dbReference type="InterPro" id="IPR036676">
    <property type="entry name" value="PurM-like_C_sf"/>
</dbReference>
<dbReference type="InterPro" id="IPR016188">
    <property type="entry name" value="PurM-like_N"/>
</dbReference>
<dbReference type="InterPro" id="IPR036921">
    <property type="entry name" value="PurM-like_N_sf"/>
</dbReference>
<dbReference type="InterPro" id="IPR004733">
    <property type="entry name" value="PurM_cligase"/>
</dbReference>
<dbReference type="NCBIfam" id="TIGR00878">
    <property type="entry name" value="purM"/>
    <property type="match status" value="1"/>
</dbReference>
<dbReference type="PANTHER" id="PTHR10520:SF12">
    <property type="entry name" value="TRIFUNCTIONAL PURINE BIOSYNTHETIC PROTEIN ADENOSINE-3"/>
    <property type="match status" value="1"/>
</dbReference>
<dbReference type="PANTHER" id="PTHR10520">
    <property type="entry name" value="TRIFUNCTIONAL PURINE BIOSYNTHETIC PROTEIN ADENOSINE-3-RELATED"/>
    <property type="match status" value="1"/>
</dbReference>
<dbReference type="Pfam" id="PF00586">
    <property type="entry name" value="AIRS"/>
    <property type="match status" value="1"/>
</dbReference>
<dbReference type="Pfam" id="PF02769">
    <property type="entry name" value="AIRS_C"/>
    <property type="match status" value="1"/>
</dbReference>
<dbReference type="SUPFAM" id="SSF56042">
    <property type="entry name" value="PurM C-terminal domain-like"/>
    <property type="match status" value="1"/>
</dbReference>
<dbReference type="SUPFAM" id="SSF55326">
    <property type="entry name" value="PurM N-terminal domain-like"/>
    <property type="match status" value="1"/>
</dbReference>
<comment type="catalytic activity">
    <reaction evidence="1">
        <text>2-formamido-N(1)-(5-O-phospho-beta-D-ribosyl)acetamidine + ATP = 5-amino-1-(5-phospho-beta-D-ribosyl)imidazole + ADP + phosphate + H(+)</text>
        <dbReference type="Rhea" id="RHEA:23032"/>
        <dbReference type="ChEBI" id="CHEBI:15378"/>
        <dbReference type="ChEBI" id="CHEBI:30616"/>
        <dbReference type="ChEBI" id="CHEBI:43474"/>
        <dbReference type="ChEBI" id="CHEBI:137981"/>
        <dbReference type="ChEBI" id="CHEBI:147287"/>
        <dbReference type="ChEBI" id="CHEBI:456216"/>
        <dbReference type="EC" id="6.3.3.1"/>
    </reaction>
</comment>
<comment type="pathway">
    <text evidence="1">Purine metabolism; IMP biosynthesis via de novo pathway; 5-amino-1-(5-phospho-D-ribosyl)imidazole from N(2)-formyl-N(1)-(5-phospho-D-ribosyl)glycinamide: step 2/2.</text>
</comment>
<comment type="subcellular location">
    <subcellularLocation>
        <location evidence="1">Cytoplasm</location>
    </subcellularLocation>
</comment>
<comment type="similarity">
    <text evidence="1">Belongs to the AIR synthase family.</text>
</comment>
<evidence type="ECO:0000255" key="1">
    <source>
        <dbReference type="HAMAP-Rule" id="MF_00741"/>
    </source>
</evidence>
<protein>
    <recommendedName>
        <fullName evidence="1">Phosphoribosylformylglycinamidine cyclo-ligase</fullName>
        <ecNumber evidence="1">6.3.3.1</ecNumber>
    </recommendedName>
    <alternativeName>
        <fullName evidence="1">AIR synthase</fullName>
    </alternativeName>
    <alternativeName>
        <fullName evidence="1">AIRS</fullName>
    </alternativeName>
    <alternativeName>
        <fullName evidence="1">Phosphoribosyl-aminoimidazole synthetase</fullName>
    </alternativeName>
</protein>
<keyword id="KW-0067">ATP-binding</keyword>
<keyword id="KW-0963">Cytoplasm</keyword>
<keyword id="KW-0436">Ligase</keyword>
<keyword id="KW-0547">Nucleotide-binding</keyword>
<keyword id="KW-0658">Purine biosynthesis</keyword>
<organism>
    <name type="scientific">Methanococcus maripaludis (strain C5 / ATCC BAA-1333)</name>
    <dbReference type="NCBI Taxonomy" id="402880"/>
    <lineage>
        <taxon>Archaea</taxon>
        <taxon>Methanobacteriati</taxon>
        <taxon>Methanobacteriota</taxon>
        <taxon>Methanomada group</taxon>
        <taxon>Methanococci</taxon>
        <taxon>Methanococcales</taxon>
        <taxon>Methanococcaceae</taxon>
        <taxon>Methanococcus</taxon>
    </lineage>
</organism>
<feature type="chain" id="PRO_1000046446" description="Phosphoribosylformylglycinamidine cyclo-ligase">
    <location>
        <begin position="1"/>
        <end position="349"/>
    </location>
</feature>
<name>PUR5_METM5</name>
<sequence length="349" mass="38190">MVTYKDAGVDIYKEDKVIRALASQIKFERNDAIKPADLKGHYAGAIEFGDYYLVLCTDGVGSKMVVAEMANKFDTVPIDMIAMNVNDAICIGAEPVALVDYMAVEDITEDIASQIGKGLNDGIKESNINLIGGETASLPNMIKGVDLAGTVLAVVKKDEIVSGKEVKPGDLIVGLRSSGIHSNGLSLARKVFFDIANLDVNSKLSHGKTVAEELLTPTKIYVKPVLEMIKQVNVKGLAHITGGGFRKLKRLNKEVCYKIDELPEILPIFKEIQNLGSVADEEMFKTFNMGIGFCVIVDKEDAEKIIEISNHHNIPAFVIGKIEDSVELNGETKRETVLVEYNNKKMIME</sequence>
<accession>A4FWS4</accession>
<reference key="1">
    <citation type="submission" date="2007-03" db="EMBL/GenBank/DDBJ databases">
        <title>Complete sequence of chromosome of Methanococcus maripaludis C5.</title>
        <authorList>
            <consortium name="US DOE Joint Genome Institute"/>
            <person name="Copeland A."/>
            <person name="Lucas S."/>
            <person name="Lapidus A."/>
            <person name="Barry K."/>
            <person name="Glavina del Rio T."/>
            <person name="Dalin E."/>
            <person name="Tice H."/>
            <person name="Pitluck S."/>
            <person name="Chertkov O."/>
            <person name="Brettin T."/>
            <person name="Bruce D."/>
            <person name="Han C."/>
            <person name="Detter J.C."/>
            <person name="Schmutz J."/>
            <person name="Larimer F."/>
            <person name="Land M."/>
            <person name="Hauser L."/>
            <person name="Kyrpides N."/>
            <person name="Mikhailova N."/>
            <person name="Sieprawska-Lupa M."/>
            <person name="Whitman W.B."/>
            <person name="Richardson P."/>
        </authorList>
    </citation>
    <scope>NUCLEOTIDE SEQUENCE [LARGE SCALE GENOMIC DNA]</scope>
    <source>
        <strain>C5 / ATCC BAA-1333</strain>
    </source>
</reference>